<comment type="function">
    <text evidence="1 4 5 6">Mediates pre-mRNA alternative splicing regulation. Acts either as activator or repressor of splicing on specific pre-mRNA targets. Inhibits cardiac troponin-T (TNNT2) pre-mRNA exon inclusion but induces insulin receptor (IR) pre-mRNA exon inclusion in muscle. Antagonizes the alternative splicing activity pattern of CELF proteins. RNA-binding protein that binds to 5'ACACCC-3' core sequence, termed zipcode, within the 3'UTR of ITGA3. Binds to CUG triplet repeat expansion in myotonic dystrophy muscle cells by sequestering the target RNAs. Together with RNA binding proteins RBPMS and RBFOX2, activates vascular smooth muscle cells alternative splicing events (By similarity). Regulates NCOR2 alternative splicing (By similarity). Seems to regulate expression and localization of ITGA3 by transporting it from the nucleus to cytoplasm at adhesion plaques. May play a role in myotonic dystrophy pathophysiology (DM).</text>
</comment>
<comment type="subunit">
    <text evidence="5 7">Interacts with ITGA3.</text>
</comment>
<comment type="interaction">
    <interactant intactId="EBI-13307411">
        <id>Q5VZF2-2</id>
    </interactant>
    <interactant intactId="EBI-607085">
        <id>P09012</id>
        <label>SNRPA</label>
    </interactant>
    <organismsDiffer>false</organismsDiffer>
    <experiments>3</experiments>
</comment>
<comment type="interaction">
    <interactant intactId="EBI-13307411">
        <id>Q5VZF2-2</id>
    </interactant>
    <interactant intactId="EBI-11064654">
        <id>Q01085-2</id>
        <label>TIAL1</label>
    </interactant>
    <organismsDiffer>false</organismsDiffer>
    <experiments>3</experiments>
</comment>
<comment type="subcellular location">
    <subcellularLocation>
        <location evidence="3">Nucleus</location>
    </subcellularLocation>
    <subcellularLocation>
        <location evidence="5">Cytoplasm</location>
    </subcellularLocation>
    <text>Greater concentration in the nucleus. Expressed in or near large cytoplasmic adhesion plaques (PubMed:16273094). Location in the cytoplasm is microtubule-dependent (PubMed:16273094). In both DM1 and DM2 patients, colocalizes with nuclear foci of retained expanded-repeat transcripts (PubMed:11929853).</text>
</comment>
<comment type="alternative products">
    <event type="alternative splicing"/>
    <isoform>
        <id>Q5VZF2-1</id>
        <name>1</name>
        <sequence type="displayed"/>
    </isoform>
    <isoform>
        <id>Q5VZF2-2</id>
        <name>2</name>
        <sequence type="described" ref="VSP_022887"/>
    </isoform>
    <isoform>
        <id>Q5VZF2-3</id>
        <name>3</name>
        <sequence type="described" ref="VSP_022888"/>
    </isoform>
</comment>
<comment type="tissue specificity">
    <text evidence="3">Expressed in heart, brain, placenta, lung, liver, skeletal muscle, kidney and pancreas.</text>
</comment>
<comment type="similarity">
    <text evidence="12">Belongs to the muscleblind family.</text>
</comment>
<organism>
    <name type="scientific">Homo sapiens</name>
    <name type="common">Human</name>
    <dbReference type="NCBI Taxonomy" id="9606"/>
    <lineage>
        <taxon>Eukaryota</taxon>
        <taxon>Metazoa</taxon>
        <taxon>Chordata</taxon>
        <taxon>Craniata</taxon>
        <taxon>Vertebrata</taxon>
        <taxon>Euteleostomi</taxon>
        <taxon>Mammalia</taxon>
        <taxon>Eutheria</taxon>
        <taxon>Euarchontoglires</taxon>
        <taxon>Primates</taxon>
        <taxon>Haplorrhini</taxon>
        <taxon>Catarrhini</taxon>
        <taxon>Hominidae</taxon>
        <taxon>Homo</taxon>
    </lineage>
</organism>
<keyword id="KW-0002">3D-structure</keyword>
<keyword id="KW-0025">Alternative splicing</keyword>
<keyword id="KW-0963">Cytoplasm</keyword>
<keyword id="KW-0479">Metal-binding</keyword>
<keyword id="KW-0507">mRNA processing</keyword>
<keyword id="KW-0508">mRNA splicing</keyword>
<keyword id="KW-0539">Nucleus</keyword>
<keyword id="KW-1267">Proteomics identification</keyword>
<keyword id="KW-1185">Reference proteome</keyword>
<keyword id="KW-0677">Repeat</keyword>
<keyword id="KW-0694">RNA-binding</keyword>
<keyword id="KW-0862">Zinc</keyword>
<keyword id="KW-0863">Zinc-finger</keyword>
<reference key="1">
    <citation type="journal article" date="2005" name="Nat. Cell Biol.">
        <title>RNA-dependent integrin alpha3 protein localization regulated by the muscleblind-like protein MLP1.</title>
        <authorList>
            <person name="Adereth Y."/>
            <person name="Dammai V."/>
            <person name="Kose N."/>
            <person name="Li R."/>
            <person name="Hsu T."/>
        </authorList>
    </citation>
    <scope>NUCLEOTIDE SEQUENCE [MRNA] (ISOFORM 2)</scope>
    <scope>FUNCTION</scope>
    <scope>SUBCELLULAR LOCATION</scope>
    <scope>INTERACTION WITH ITGA3</scope>
    <scope>RNA-BINDING</scope>
</reference>
<reference key="2">
    <citation type="journal article" date="2006" name="Nat. Cell Biol.">
        <authorList>
            <person name="Adereth Y."/>
            <person name="Dammai V."/>
            <person name="Kose N."/>
            <person name="Li R."/>
            <person name="Hsu T."/>
        </authorList>
    </citation>
    <scope>ERRATUM OF PUBMED:16273094</scope>
</reference>
<reference key="3">
    <citation type="submission" date="2002-05" db="EMBL/GenBank/DDBJ databases">
        <authorList>
            <person name="Teng-umnuay P."/>
            <person name="Urbinati C.R."/>
            <person name="Swanson M.S."/>
        </authorList>
    </citation>
    <scope>NUCLEOTIDE SEQUENCE [MRNA] (ISOFORM 3)</scope>
    <source>
        <tissue>Cervix carcinoma</tissue>
    </source>
</reference>
<reference key="4">
    <citation type="journal article" date="2007" name="BMC Genomics">
        <title>The full-ORF clone resource of the German cDNA consortium.</title>
        <authorList>
            <person name="Bechtel S."/>
            <person name="Rosenfelder H."/>
            <person name="Duda A."/>
            <person name="Schmidt C.P."/>
            <person name="Ernst U."/>
            <person name="Wellenreuther R."/>
            <person name="Mehrle A."/>
            <person name="Schuster C."/>
            <person name="Bahr A."/>
            <person name="Bloecker H."/>
            <person name="Heubner D."/>
            <person name="Hoerlein A."/>
            <person name="Michel G."/>
            <person name="Wedler H."/>
            <person name="Koehrer K."/>
            <person name="Ottenwaelder B."/>
            <person name="Poustka A."/>
            <person name="Wiemann S."/>
            <person name="Schupp I."/>
        </authorList>
    </citation>
    <scope>NUCLEOTIDE SEQUENCE [LARGE SCALE MRNA] (ISOFORM 3)</scope>
    <source>
        <tissue>Colon carcinoma</tissue>
    </source>
</reference>
<reference key="5">
    <citation type="journal article" date="2004" name="Nature">
        <title>The DNA sequence and analysis of human chromosome 13.</title>
        <authorList>
            <person name="Dunham A."/>
            <person name="Matthews L.H."/>
            <person name="Burton J."/>
            <person name="Ashurst J.L."/>
            <person name="Howe K.L."/>
            <person name="Ashcroft K.J."/>
            <person name="Beare D.M."/>
            <person name="Burford D.C."/>
            <person name="Hunt S.E."/>
            <person name="Griffiths-Jones S."/>
            <person name="Jones M.C."/>
            <person name="Keenan S.J."/>
            <person name="Oliver K."/>
            <person name="Scott C.E."/>
            <person name="Ainscough R."/>
            <person name="Almeida J.P."/>
            <person name="Ambrose K.D."/>
            <person name="Andrews D.T."/>
            <person name="Ashwell R.I.S."/>
            <person name="Babbage A.K."/>
            <person name="Bagguley C.L."/>
            <person name="Bailey J."/>
            <person name="Bannerjee R."/>
            <person name="Barlow K.F."/>
            <person name="Bates K."/>
            <person name="Beasley H."/>
            <person name="Bird C.P."/>
            <person name="Bray-Allen S."/>
            <person name="Brown A.J."/>
            <person name="Brown J.Y."/>
            <person name="Burrill W."/>
            <person name="Carder C."/>
            <person name="Carter N.P."/>
            <person name="Chapman J.C."/>
            <person name="Clamp M.E."/>
            <person name="Clark S.Y."/>
            <person name="Clarke G."/>
            <person name="Clee C.M."/>
            <person name="Clegg S.C."/>
            <person name="Cobley V."/>
            <person name="Collins J.E."/>
            <person name="Corby N."/>
            <person name="Coville G.J."/>
            <person name="Deloukas P."/>
            <person name="Dhami P."/>
            <person name="Dunham I."/>
            <person name="Dunn M."/>
            <person name="Earthrowl M.E."/>
            <person name="Ellington A.G."/>
            <person name="Faulkner L."/>
            <person name="Frankish A.G."/>
            <person name="Frankland J."/>
            <person name="French L."/>
            <person name="Garner P."/>
            <person name="Garnett J."/>
            <person name="Gilbert J.G.R."/>
            <person name="Gilson C.J."/>
            <person name="Ghori J."/>
            <person name="Grafham D.V."/>
            <person name="Gribble S.M."/>
            <person name="Griffiths C."/>
            <person name="Hall R.E."/>
            <person name="Hammond S."/>
            <person name="Harley J.L."/>
            <person name="Hart E.A."/>
            <person name="Heath P.D."/>
            <person name="Howden P.J."/>
            <person name="Huckle E.J."/>
            <person name="Hunt P.J."/>
            <person name="Hunt A.R."/>
            <person name="Johnson C."/>
            <person name="Johnson D."/>
            <person name="Kay M."/>
            <person name="Kimberley A.M."/>
            <person name="King A."/>
            <person name="Laird G.K."/>
            <person name="Langford C.J."/>
            <person name="Lawlor S."/>
            <person name="Leongamornlert D.A."/>
            <person name="Lloyd D.M."/>
            <person name="Lloyd C."/>
            <person name="Loveland J.E."/>
            <person name="Lovell J."/>
            <person name="Martin S."/>
            <person name="Mashreghi-Mohammadi M."/>
            <person name="McLaren S.J."/>
            <person name="McMurray A."/>
            <person name="Milne S."/>
            <person name="Moore M.J.F."/>
            <person name="Nickerson T."/>
            <person name="Palmer S.A."/>
            <person name="Pearce A.V."/>
            <person name="Peck A.I."/>
            <person name="Pelan S."/>
            <person name="Phillimore B."/>
            <person name="Porter K.M."/>
            <person name="Rice C.M."/>
            <person name="Searle S."/>
            <person name="Sehra H.K."/>
            <person name="Shownkeen R."/>
            <person name="Skuce C.D."/>
            <person name="Smith M."/>
            <person name="Steward C.A."/>
            <person name="Sycamore N."/>
            <person name="Tester J."/>
            <person name="Thomas D.W."/>
            <person name="Tracey A."/>
            <person name="Tromans A."/>
            <person name="Tubby B."/>
            <person name="Wall M."/>
            <person name="Wallis J.M."/>
            <person name="West A.P."/>
            <person name="Whitehead S.L."/>
            <person name="Willey D.L."/>
            <person name="Wilming L."/>
            <person name="Wray P.W."/>
            <person name="Wright M.W."/>
            <person name="Young L."/>
            <person name="Coulson A."/>
            <person name="Durbin R.M."/>
            <person name="Hubbard T."/>
            <person name="Sulston J.E."/>
            <person name="Beck S."/>
            <person name="Bentley D.R."/>
            <person name="Rogers J."/>
            <person name="Ross M.T."/>
        </authorList>
    </citation>
    <scope>NUCLEOTIDE SEQUENCE [LARGE SCALE GENOMIC DNA]</scope>
</reference>
<reference key="6">
    <citation type="journal article" date="2004" name="Genome Res.">
        <title>The status, quality, and expansion of the NIH full-length cDNA project: the Mammalian Gene Collection (MGC).</title>
        <authorList>
            <consortium name="The MGC Project Team"/>
        </authorList>
    </citation>
    <scope>NUCLEOTIDE SEQUENCE [LARGE SCALE MRNA] (ISOFORMS 1; 2 AND 3)</scope>
    <source>
        <tissue>Brain</tissue>
    </source>
</reference>
<reference key="7">
    <citation type="journal article" date="2002" name="Hum. Mol. Genet.">
        <title>Three proteins, MBNL, MBLL and MBXL, co-localize in vivo with nuclear foci of expanded-repeat transcripts in DM1 and DM2 cells.</title>
        <authorList>
            <person name="Fardaei M."/>
            <person name="Rogers M.T."/>
            <person name="Thorpe H.M."/>
            <person name="Larkin K."/>
            <person name="Hamshere M.G."/>
            <person name="Harper P.S."/>
            <person name="Brook J.D."/>
        </authorList>
    </citation>
    <scope>SUBCELLULAR LOCATION</scope>
    <scope>TISSUE SPECIFICITY</scope>
</reference>
<reference key="8">
    <citation type="journal article" date="2004" name="EMBO J.">
        <title>Muscleblind proteins regulate alternative splicing.</title>
        <authorList>
            <person name="Ho T.H."/>
            <person name="Charlet-B N."/>
            <person name="Poulos M.G."/>
            <person name="Singh G."/>
            <person name="Swanson M.S."/>
            <person name="Cooper T.A."/>
        </authorList>
    </citation>
    <scope>FUNCTION</scope>
</reference>
<reference key="9">
    <citation type="journal article" date="2006" name="EMBO J.">
        <title>Interaction of muscleblind, CUG-BP1 and hnRNP H proteins in DM1-associated aberrant IR splicing.</title>
        <authorList>
            <person name="Paul S."/>
            <person name="Dansithong W."/>
            <person name="Kim D."/>
            <person name="Rossi J."/>
            <person name="Webster N.J."/>
            <person name="Comai L."/>
            <person name="Reddy S."/>
        </authorList>
    </citation>
    <scope>FUNCTION</scope>
</reference>
<reference key="10">
    <citation type="submission" date="2007-06" db="PDB data bank">
        <title>Solution structure of the ZF-CCCHx2 domain of muscleblind-like 2, isoform 1 [Homo sapiens].</title>
        <authorList>
            <consortium name="RIKEN structural genomics initiative (RSGI)"/>
        </authorList>
    </citation>
    <scope>STRUCTURE BY NMR OF 166-257</scope>
</reference>
<reference key="11">
    <citation type="journal article" date="2009" name="Protein Sci.">
        <title>Solution structure of the RNA binding domain in the human muscleblind-like protein 2.</title>
        <authorList>
            <person name="He F."/>
            <person name="Dang W."/>
            <person name="Abe C."/>
            <person name="Tsuda K."/>
            <person name="Inoue M."/>
            <person name="Watanabe S."/>
            <person name="Kobayashi N."/>
            <person name="Kigawa T."/>
            <person name="Matsuda T."/>
            <person name="Yabuki T."/>
            <person name="Aoki M."/>
            <person name="Seki E."/>
            <person name="Harada T."/>
            <person name="Tomabechi Y."/>
            <person name="Terada T."/>
            <person name="Shirouzu M."/>
            <person name="Tanaka A."/>
            <person name="Guntert P."/>
            <person name="Muto Y."/>
            <person name="Yokoyama S."/>
        </authorList>
    </citation>
    <scope>STRUCTURE BY NMR OF 7-82 AND 166-257 IN COMPLEX WITH ZINC IONS</scope>
</reference>
<sequence>MALNVAPVRDTKWLTLEVCRQFQRGTCSRSDEECKFAHPPKSCQVENGRVIACFDSLKGRCSRENCKYLHPPTHLKTQLEINGRNNLIQQKTAAAMLAQQMQFMFPGTPLHPVPTFPVGPAIGTNTAISFAPYLAPVTPGVGLVPTEILPTTPVIVPGSPPVTVPGSTATQKLLRTDKLEVCREFQRGNCARGETDCRFAHPADSTMIDTSDNTVTVCMDYIKGRCMREKCKYFHPPAHLQAKIKAAQHQANQAAVAAQAAAAAATVMAFPPGALHPLPKRQALEKSNGTSAVFNPSVLHYQQALTSAQLQQHAAFIPTGSVLCMTPATSIDNSEIISRNGMECQESALRITKHCYCTYYPVSSSIELPQTAC</sequence>
<proteinExistence type="evidence at protein level"/>
<accession>Q5VZF2</accession>
<accession>Q3SXY5</accession>
<accession>Q58F19</accession>
<accession>Q8NEV3</accession>
<accession>Q8TD82</accession>
<name>MBNL2_HUMAN</name>
<protein>
    <recommendedName>
        <fullName>Muscleblind-like protein 2</fullName>
    </recommendedName>
    <alternativeName>
        <fullName>Muscleblind-like protein 1</fullName>
    </alternativeName>
    <alternativeName>
        <fullName>Muscleblind-like protein-like</fullName>
    </alternativeName>
    <alternativeName>
        <fullName>Muscleblind-like protein-like 39</fullName>
    </alternativeName>
</protein>
<evidence type="ECO:0000250" key="1">
    <source>
        <dbReference type="UniProtKB" id="F2Z3T4"/>
    </source>
</evidence>
<evidence type="ECO:0000255" key="2">
    <source>
        <dbReference type="PROSITE-ProRule" id="PRU00723"/>
    </source>
</evidence>
<evidence type="ECO:0000269" key="3">
    <source>
    </source>
</evidence>
<evidence type="ECO:0000269" key="4">
    <source>
    </source>
</evidence>
<evidence type="ECO:0000269" key="5">
    <source>
    </source>
</evidence>
<evidence type="ECO:0000269" key="6">
    <source>
    </source>
</evidence>
<evidence type="ECO:0000269" key="7">
    <source>
    </source>
</evidence>
<evidence type="ECO:0000303" key="8">
    <source>
    </source>
</evidence>
<evidence type="ECO:0000303" key="9">
    <source>
    </source>
</evidence>
<evidence type="ECO:0000303" key="10">
    <source>
    </source>
</evidence>
<evidence type="ECO:0000303" key="11">
    <source ref="3"/>
</evidence>
<evidence type="ECO:0000305" key="12"/>
<evidence type="ECO:0007829" key="13">
    <source>
        <dbReference type="PDB" id="2E5S"/>
    </source>
</evidence>
<evidence type="ECO:0007829" key="14">
    <source>
        <dbReference type="PDB" id="2RPP"/>
    </source>
</evidence>
<gene>
    <name type="primary">MBNL2</name>
    <name type="synonym">MBLL</name>
    <name type="synonym">MBLL39</name>
    <name type="synonym">MLP1</name>
</gene>
<dbReference type="EMBL" id="AF491866">
    <property type="protein sequence ID" value="AAM09798.1"/>
    <property type="molecule type" value="mRNA"/>
</dbReference>
<dbReference type="EMBL" id="AY101770">
    <property type="protein sequence ID" value="AAM50085.1"/>
    <property type="molecule type" value="mRNA"/>
</dbReference>
<dbReference type="EMBL" id="CR749802">
    <property type="protein sequence ID" value="CAH18662.1"/>
    <property type="molecule type" value="mRNA"/>
</dbReference>
<dbReference type="EMBL" id="AL161430">
    <property type="status" value="NOT_ANNOTATED_CDS"/>
    <property type="molecule type" value="Genomic_DNA"/>
</dbReference>
<dbReference type="EMBL" id="AL442067">
    <property type="status" value="NOT_ANNOTATED_CDS"/>
    <property type="molecule type" value="Genomic_DNA"/>
</dbReference>
<dbReference type="EMBL" id="BC020418">
    <property type="protein sequence ID" value="AAH20418.1"/>
    <property type="molecule type" value="mRNA"/>
</dbReference>
<dbReference type="EMBL" id="BC104038">
    <property type="protein sequence ID" value="AAI04039.1"/>
    <property type="molecule type" value="mRNA"/>
</dbReference>
<dbReference type="EMBL" id="BC104039">
    <property type="protein sequence ID" value="AAI04040.1"/>
    <property type="molecule type" value="mRNA"/>
</dbReference>
<dbReference type="EMBL" id="BC104040">
    <property type="protein sequence ID" value="AAI04041.1"/>
    <property type="molecule type" value="mRNA"/>
</dbReference>
<dbReference type="CCDS" id="CCDS76644.1">
    <molecule id="Q5VZF2-1"/>
</dbReference>
<dbReference type="CCDS" id="CCDS9483.1">
    <molecule id="Q5VZF2-3"/>
</dbReference>
<dbReference type="CCDS" id="CCDS9484.1">
    <molecule id="Q5VZF2-2"/>
</dbReference>
<dbReference type="RefSeq" id="NP_001292999.1">
    <molecule id="Q5VZF2-1"/>
    <property type="nucleotide sequence ID" value="NM_001306070.2"/>
</dbReference>
<dbReference type="RefSeq" id="NP_001369578.1">
    <molecule id="Q5VZF2-2"/>
    <property type="nucleotide sequence ID" value="NM_001382649.1"/>
</dbReference>
<dbReference type="RefSeq" id="NP_001369579.1">
    <molecule id="Q5VZF2-2"/>
    <property type="nucleotide sequence ID" value="NM_001382650.1"/>
</dbReference>
<dbReference type="RefSeq" id="NP_001369580.1">
    <molecule id="Q5VZF2-3"/>
    <property type="nucleotide sequence ID" value="NM_001382651.1"/>
</dbReference>
<dbReference type="RefSeq" id="NP_001369581.1">
    <molecule id="Q5VZF2-3"/>
    <property type="nucleotide sequence ID" value="NM_001382652.1"/>
</dbReference>
<dbReference type="RefSeq" id="NP_001369582.1">
    <molecule id="Q5VZF2-3"/>
    <property type="nucleotide sequence ID" value="NM_001382653.1"/>
</dbReference>
<dbReference type="RefSeq" id="NP_001369583.1">
    <molecule id="Q5VZF2-3"/>
    <property type="nucleotide sequence ID" value="NM_001382654.1"/>
</dbReference>
<dbReference type="RefSeq" id="NP_001369585.1">
    <molecule id="Q5VZF2-3"/>
    <property type="nucleotide sequence ID" value="NM_001382656.1"/>
</dbReference>
<dbReference type="RefSeq" id="NP_001369589.1">
    <molecule id="Q5VZF2-3"/>
    <property type="nucleotide sequence ID" value="NM_001382660.1"/>
</dbReference>
<dbReference type="RefSeq" id="NP_001369590.1">
    <molecule id="Q5VZF2-3"/>
    <property type="nucleotide sequence ID" value="NM_001382661.1"/>
</dbReference>
<dbReference type="RefSeq" id="NP_001369592.1">
    <molecule id="Q5VZF2-3"/>
    <property type="nucleotide sequence ID" value="NM_001382663.1"/>
</dbReference>
<dbReference type="RefSeq" id="NP_001369595.1">
    <molecule id="Q5VZF2-1"/>
    <property type="nucleotide sequence ID" value="NM_001382666.1"/>
</dbReference>
<dbReference type="RefSeq" id="NP_001369596.1">
    <molecule id="Q5VZF2-1"/>
    <property type="nucleotide sequence ID" value="NM_001382667.1"/>
</dbReference>
<dbReference type="RefSeq" id="NP_001369597.1">
    <molecule id="Q5VZF2-1"/>
    <property type="nucleotide sequence ID" value="NM_001382668.1"/>
</dbReference>
<dbReference type="RefSeq" id="NP_659002.1">
    <molecule id="Q5VZF2-2"/>
    <property type="nucleotide sequence ID" value="NM_144778.4"/>
</dbReference>
<dbReference type="RefSeq" id="NP_997187.1">
    <molecule id="Q5VZF2-3"/>
    <property type="nucleotide sequence ID" value="NM_207304.3"/>
</dbReference>
<dbReference type="RefSeq" id="XP_016875798.1">
    <property type="nucleotide sequence ID" value="XM_017020309.1"/>
</dbReference>
<dbReference type="RefSeq" id="XP_016875799.1">
    <property type="nucleotide sequence ID" value="XM_017020310.1"/>
</dbReference>
<dbReference type="RefSeq" id="XP_016875800.1">
    <property type="nucleotide sequence ID" value="XM_017020311.1"/>
</dbReference>
<dbReference type="RefSeq" id="XP_047285963.1">
    <molecule id="Q5VZF2-1"/>
    <property type="nucleotide sequence ID" value="XM_047430007.1"/>
</dbReference>
<dbReference type="RefSeq" id="XP_047285965.1">
    <molecule id="Q5VZF2-2"/>
    <property type="nucleotide sequence ID" value="XM_047430009.1"/>
</dbReference>
<dbReference type="RefSeq" id="XP_047285966.1">
    <molecule id="Q5VZF2-3"/>
    <property type="nucleotide sequence ID" value="XM_047430010.1"/>
</dbReference>
<dbReference type="RefSeq" id="XP_054229957.1">
    <molecule id="Q5VZF2-1"/>
    <property type="nucleotide sequence ID" value="XM_054373982.1"/>
</dbReference>
<dbReference type="RefSeq" id="XP_054229959.1">
    <molecule id="Q5VZF2-2"/>
    <property type="nucleotide sequence ID" value="XM_054373984.1"/>
</dbReference>
<dbReference type="RefSeq" id="XP_054229960.1">
    <molecule id="Q5VZF2-3"/>
    <property type="nucleotide sequence ID" value="XM_054373985.1"/>
</dbReference>
<dbReference type="PDB" id="2E5S">
    <property type="method" value="NMR"/>
    <property type="chains" value="A=167-257"/>
</dbReference>
<dbReference type="PDB" id="2RPP">
    <property type="method" value="NMR"/>
    <property type="chains" value="A=7-82"/>
</dbReference>
<dbReference type="PDBsum" id="2E5S"/>
<dbReference type="PDBsum" id="2RPP"/>
<dbReference type="SMR" id="Q5VZF2"/>
<dbReference type="BioGRID" id="115452">
    <property type="interactions" value="34"/>
</dbReference>
<dbReference type="FunCoup" id="Q5VZF2">
    <property type="interactions" value="2350"/>
</dbReference>
<dbReference type="IntAct" id="Q5VZF2">
    <property type="interactions" value="6"/>
</dbReference>
<dbReference type="STRING" id="9606.ENSP00000365861"/>
<dbReference type="GlyGen" id="Q5VZF2">
    <property type="glycosylation" value="2 sites, 1 O-linked glycan (1 site)"/>
</dbReference>
<dbReference type="iPTMnet" id="Q5VZF2"/>
<dbReference type="PhosphoSitePlus" id="Q5VZF2"/>
<dbReference type="BioMuta" id="MBNL2"/>
<dbReference type="DMDM" id="125952110"/>
<dbReference type="jPOST" id="Q5VZF2"/>
<dbReference type="MassIVE" id="Q5VZF2"/>
<dbReference type="PaxDb" id="9606-ENSP00000267287"/>
<dbReference type="PeptideAtlas" id="Q5VZF2"/>
<dbReference type="ProteomicsDB" id="65695">
    <molecule id="Q5VZF2-1"/>
</dbReference>
<dbReference type="ProteomicsDB" id="65696">
    <molecule id="Q5VZF2-2"/>
</dbReference>
<dbReference type="ProteomicsDB" id="65697">
    <molecule id="Q5VZF2-3"/>
</dbReference>
<dbReference type="Pumba" id="Q5VZF2"/>
<dbReference type="Antibodypedia" id="24898">
    <property type="antibodies" value="122 antibodies from 20 providers"/>
</dbReference>
<dbReference type="DNASU" id="10150"/>
<dbReference type="Ensembl" id="ENST00000343600.9">
    <molecule id="Q5VZF2-3"/>
    <property type="protein sequence ID" value="ENSP00000344214.4"/>
    <property type="gene ID" value="ENSG00000139793.21"/>
</dbReference>
<dbReference type="Ensembl" id="ENST00000345429.10">
    <molecule id="Q5VZF2-2"/>
    <property type="protein sequence ID" value="ENSP00000267287.7"/>
    <property type="gene ID" value="ENSG00000139793.21"/>
</dbReference>
<dbReference type="Ensembl" id="ENST00000376673.8">
    <molecule id="Q5VZF2-1"/>
    <property type="protein sequence ID" value="ENSP00000365861.3"/>
    <property type="gene ID" value="ENSG00000139793.21"/>
</dbReference>
<dbReference type="Ensembl" id="ENST00000397601.5">
    <molecule id="Q5VZF2-3"/>
    <property type="protein sequence ID" value="ENSP00000380726.1"/>
    <property type="gene ID" value="ENSG00000139793.21"/>
</dbReference>
<dbReference type="GeneID" id="10150"/>
<dbReference type="KEGG" id="hsa:10150"/>
<dbReference type="UCSC" id="uc001vmz.5">
    <molecule id="Q5VZF2-1"/>
    <property type="organism name" value="human"/>
</dbReference>
<dbReference type="AGR" id="HGNC:16746"/>
<dbReference type="CTD" id="10150"/>
<dbReference type="DisGeNET" id="10150"/>
<dbReference type="GeneCards" id="MBNL2"/>
<dbReference type="HGNC" id="HGNC:16746">
    <property type="gene designation" value="MBNL2"/>
</dbReference>
<dbReference type="HPA" id="ENSG00000139793">
    <property type="expression patterns" value="Low tissue specificity"/>
</dbReference>
<dbReference type="MIM" id="607327">
    <property type="type" value="gene"/>
</dbReference>
<dbReference type="neXtProt" id="NX_Q5VZF2"/>
<dbReference type="OpenTargets" id="ENSG00000139793"/>
<dbReference type="PharmGKB" id="PA134901420"/>
<dbReference type="VEuPathDB" id="HostDB:ENSG00000139793"/>
<dbReference type="eggNOG" id="KOG2494">
    <property type="taxonomic scope" value="Eukaryota"/>
</dbReference>
<dbReference type="GeneTree" id="ENSGT00950000182897"/>
<dbReference type="InParanoid" id="Q5VZF2"/>
<dbReference type="OMA" id="PTXNSEI"/>
<dbReference type="OrthoDB" id="6285980at2759"/>
<dbReference type="PAN-GO" id="Q5VZF2">
    <property type="GO annotations" value="4 GO annotations based on evolutionary models"/>
</dbReference>
<dbReference type="PhylomeDB" id="Q5VZF2"/>
<dbReference type="TreeFam" id="TF321931"/>
<dbReference type="PathwayCommons" id="Q5VZF2"/>
<dbReference type="SignaLink" id="Q5VZF2"/>
<dbReference type="BioGRID-ORCS" id="10150">
    <property type="hits" value="11 hits in 1156 CRISPR screens"/>
</dbReference>
<dbReference type="CD-CODE" id="232F8A39">
    <property type="entry name" value="P-body"/>
</dbReference>
<dbReference type="CD-CODE" id="DEE660B4">
    <property type="entry name" value="Stress granule"/>
</dbReference>
<dbReference type="ChiTaRS" id="MBNL2">
    <property type="organism name" value="human"/>
</dbReference>
<dbReference type="EvolutionaryTrace" id="Q5VZF2"/>
<dbReference type="GeneWiki" id="MBNL2"/>
<dbReference type="GenomeRNAi" id="10150"/>
<dbReference type="Pharos" id="Q5VZF2">
    <property type="development level" value="Tbio"/>
</dbReference>
<dbReference type="PRO" id="PR:Q5VZF2"/>
<dbReference type="Proteomes" id="UP000005640">
    <property type="component" value="Chromosome 13"/>
</dbReference>
<dbReference type="RNAct" id="Q5VZF2">
    <property type="molecule type" value="protein"/>
</dbReference>
<dbReference type="Bgee" id="ENSG00000139793">
    <property type="expression patterns" value="Expressed in endothelial cell and 220 other cell types or tissues"/>
</dbReference>
<dbReference type="ExpressionAtlas" id="Q5VZF2">
    <property type="expression patterns" value="baseline and differential"/>
</dbReference>
<dbReference type="GO" id="GO:0005737">
    <property type="term" value="C:cytoplasm"/>
    <property type="evidence" value="ECO:0000318"/>
    <property type="project" value="GO_Central"/>
</dbReference>
<dbReference type="GO" id="GO:0005654">
    <property type="term" value="C:nucleoplasm"/>
    <property type="evidence" value="ECO:0000314"/>
    <property type="project" value="HPA"/>
</dbReference>
<dbReference type="GO" id="GO:0003723">
    <property type="term" value="F:RNA binding"/>
    <property type="evidence" value="ECO:0007005"/>
    <property type="project" value="UniProtKB"/>
</dbReference>
<dbReference type="GO" id="GO:1990837">
    <property type="term" value="F:sequence-specific double-stranded DNA binding"/>
    <property type="evidence" value="ECO:0000314"/>
    <property type="project" value="ARUK-UCL"/>
</dbReference>
<dbReference type="GO" id="GO:0008270">
    <property type="term" value="F:zinc ion binding"/>
    <property type="evidence" value="ECO:0007669"/>
    <property type="project" value="UniProtKB-KW"/>
</dbReference>
<dbReference type="GO" id="GO:0006397">
    <property type="term" value="P:mRNA processing"/>
    <property type="evidence" value="ECO:0007669"/>
    <property type="project" value="UniProtKB-KW"/>
</dbReference>
<dbReference type="GO" id="GO:0043484">
    <property type="term" value="P:regulation of RNA splicing"/>
    <property type="evidence" value="ECO:0000314"/>
    <property type="project" value="UniProtKB"/>
</dbReference>
<dbReference type="GO" id="GO:0008380">
    <property type="term" value="P:RNA splicing"/>
    <property type="evidence" value="ECO:0007669"/>
    <property type="project" value="UniProtKB-KW"/>
</dbReference>
<dbReference type="FunFam" id="3.30.1370.210:FF:000004">
    <property type="entry name" value="Muscleblind like splicing regulator 1"/>
    <property type="match status" value="1"/>
</dbReference>
<dbReference type="FunFam" id="3.30.1370.210:FF:000002">
    <property type="entry name" value="Muscleblind-like 1 isoform 2"/>
    <property type="match status" value="1"/>
</dbReference>
<dbReference type="Gene3D" id="3.30.1370.210">
    <property type="match status" value="2"/>
</dbReference>
<dbReference type="InterPro" id="IPR054429">
    <property type="entry name" value="Znf-CCCH_Muscleblind-like"/>
</dbReference>
<dbReference type="InterPro" id="IPR000571">
    <property type="entry name" value="Znf_CCCH"/>
</dbReference>
<dbReference type="PANTHER" id="PTHR12675">
    <property type="entry name" value="MUSCLEBLIND-LIKE PROTEIN"/>
    <property type="match status" value="1"/>
</dbReference>
<dbReference type="PANTHER" id="PTHR12675:SF4">
    <property type="entry name" value="MUSCLEBLIND-LIKE PROTEIN 2"/>
    <property type="match status" value="1"/>
</dbReference>
<dbReference type="Pfam" id="PF00642">
    <property type="entry name" value="zf-CCCH"/>
    <property type="match status" value="2"/>
</dbReference>
<dbReference type="Pfam" id="PF22628">
    <property type="entry name" value="zf-CCCH_10"/>
    <property type="match status" value="2"/>
</dbReference>
<dbReference type="SMART" id="SM00356">
    <property type="entry name" value="ZnF_C3H1"/>
    <property type="match status" value="4"/>
</dbReference>
<dbReference type="PROSITE" id="PS50103">
    <property type="entry name" value="ZF_C3H1"/>
    <property type="match status" value="4"/>
</dbReference>
<feature type="chain" id="PRO_0000274872" description="Muscleblind-like protein 2">
    <location>
        <begin position="1"/>
        <end position="373"/>
    </location>
</feature>
<feature type="zinc finger region" description="C3H1-type 1" evidence="2">
    <location>
        <begin position="13"/>
        <end position="41"/>
    </location>
</feature>
<feature type="zinc finger region" description="C3H1-type 2" evidence="2">
    <location>
        <begin position="47"/>
        <end position="73"/>
    </location>
</feature>
<feature type="zinc finger region" description="C3H1-type 3" evidence="2">
    <location>
        <begin position="176"/>
        <end position="204"/>
    </location>
</feature>
<feature type="zinc finger region" description="C3H1-type 4" evidence="2">
    <location>
        <begin position="212"/>
        <end position="238"/>
    </location>
</feature>
<feature type="splice variant" id="VSP_022888" description="In isoform 3." evidence="8 10 11">
    <location>
        <begin position="320"/>
        <end position="331"/>
    </location>
</feature>
<feature type="splice variant" id="VSP_022887" description="In isoform 2." evidence="8 9">
    <original>DNSEIISRNGMECQESALRITKHCYCTYYPVSSSIELPQTAC</original>
    <variation>VPMMHSATSATVSAATTPATSVPFAATATANQIILK</variation>
    <location>
        <begin position="332"/>
        <end position="373"/>
    </location>
</feature>
<feature type="sequence conflict" description="In Ref. 1; AAM09798." evidence="12" ref="1">
    <original>A</original>
    <variation>G</variation>
    <location>
        <position position="254"/>
    </location>
</feature>
<feature type="strand" evidence="14">
    <location>
        <begin position="12"/>
        <end position="16"/>
    </location>
</feature>
<feature type="helix" evidence="14">
    <location>
        <begin position="20"/>
        <end position="24"/>
    </location>
</feature>
<feature type="turn" evidence="14">
    <location>
        <begin position="31"/>
        <end position="33"/>
    </location>
</feature>
<feature type="strand" evidence="14">
    <location>
        <begin position="34"/>
        <end position="37"/>
    </location>
</feature>
<feature type="strand" evidence="14">
    <location>
        <begin position="41"/>
        <end position="43"/>
    </location>
</feature>
<feature type="strand" evidence="14">
    <location>
        <begin position="49"/>
        <end position="52"/>
    </location>
</feature>
<feature type="helix" evidence="14">
    <location>
        <begin position="54"/>
        <end position="58"/>
    </location>
</feature>
<feature type="helix" evidence="14">
    <location>
        <begin position="73"/>
        <end position="81"/>
    </location>
</feature>
<feature type="strand" evidence="13">
    <location>
        <begin position="176"/>
        <end position="181"/>
    </location>
</feature>
<feature type="helix" evidence="13">
    <location>
        <begin position="184"/>
        <end position="187"/>
    </location>
</feature>
<feature type="helix" evidence="13">
    <location>
        <begin position="193"/>
        <end position="196"/>
    </location>
</feature>
<feature type="strand" evidence="13">
    <location>
        <begin position="198"/>
        <end position="200"/>
    </location>
</feature>
<feature type="turn" evidence="13">
    <location>
        <begin position="210"/>
        <end position="212"/>
    </location>
</feature>
<feature type="strand" evidence="13">
    <location>
        <begin position="214"/>
        <end position="217"/>
    </location>
</feature>
<feature type="helix" evidence="13">
    <location>
        <begin position="219"/>
        <end position="223"/>
    </location>
</feature>
<feature type="helix" evidence="13">
    <location>
        <begin position="238"/>
        <end position="248"/>
    </location>
</feature>